<name>241L_IIV6</name>
<sequence>MELKLTDLAFTALPNGKVLPPGILSSSSNCKKCGLRCDNGLPYCFNCQFKCQVCGSYDNLLIKNNSTETLCKYVNPKDHVYKFATNRSAYKMKYKLCSKCKDYVLCAMCLTFNQNAFAKEIWSYEEPLFVMEICKKCMHKHTCDECNTPSSSNIKIFLDGYIYCNKCDEE</sequence>
<protein>
    <recommendedName>
        <fullName>Cysteine-rich uncharacterized protein 241L</fullName>
    </recommendedName>
</protein>
<keyword id="KW-1185">Reference proteome</keyword>
<organismHost>
    <name type="scientific">Acheta domesticus</name>
    <name type="common">House cricket</name>
    <dbReference type="NCBI Taxonomy" id="6997"/>
</organismHost>
<organismHost>
    <name type="scientific">Chilo suppressalis</name>
    <name type="common">Asiatic rice borer moth</name>
    <dbReference type="NCBI Taxonomy" id="168631"/>
</organismHost>
<organismHost>
    <name type="scientific">Gryllus bimaculatus</name>
    <name type="common">Two-spotted cricket</name>
    <dbReference type="NCBI Taxonomy" id="6999"/>
</organismHost>
<organismHost>
    <name type="scientific">Gryllus campestris</name>
    <dbReference type="NCBI Taxonomy" id="58607"/>
</organismHost>
<organismHost>
    <name type="scientific">Spodoptera frugiperda</name>
    <name type="common">Fall armyworm</name>
    <dbReference type="NCBI Taxonomy" id="7108"/>
</organismHost>
<organism>
    <name type="scientific">Invertebrate iridescent virus 6</name>
    <name type="common">IIV-6</name>
    <name type="synonym">Chilo iridescent virus</name>
    <dbReference type="NCBI Taxonomy" id="176652"/>
    <lineage>
        <taxon>Viruses</taxon>
        <taxon>Varidnaviria</taxon>
        <taxon>Bamfordvirae</taxon>
        <taxon>Nucleocytoviricota</taxon>
        <taxon>Megaviricetes</taxon>
        <taxon>Pimascovirales</taxon>
        <taxon>Iridoviridae</taxon>
        <taxon>Betairidovirinae</taxon>
        <taxon>Iridovirus</taxon>
    </lineage>
</organism>
<dbReference type="EMBL" id="AF303741">
    <property type="protein sequence ID" value="AAK82102.1"/>
    <property type="molecule type" value="Genomic_DNA"/>
</dbReference>
<dbReference type="RefSeq" id="NP_149704.1">
    <property type="nucleotide sequence ID" value="NC_003038.1"/>
</dbReference>
<dbReference type="SMR" id="Q91FT1"/>
<dbReference type="KEGG" id="vg:1733296"/>
<dbReference type="Proteomes" id="UP000001359">
    <property type="component" value="Genome"/>
</dbReference>
<feature type="chain" id="PRO_0000377828" description="Cysteine-rich uncharacterized protein 241L">
    <location>
        <begin position="1"/>
        <end position="170"/>
    </location>
</feature>
<proteinExistence type="predicted"/>
<accession>Q91FT1</accession>
<gene>
    <name type="ORF">IIV6-241L</name>
</gene>
<reference key="1">
    <citation type="journal article" date="2001" name="Virology">
        <title>Analysis of the first complete DNA sequence of an invertebrate iridovirus: coding strategy of the genome of Chilo iridescent virus.</title>
        <authorList>
            <person name="Jakob N.J."/>
            <person name="Mueller K."/>
            <person name="Bahr U."/>
            <person name="Darai G."/>
        </authorList>
    </citation>
    <scope>NUCLEOTIDE SEQUENCE [LARGE SCALE GENOMIC DNA]</scope>
</reference>
<reference key="2">
    <citation type="journal article" date="2007" name="Virol. J.">
        <title>Comparative genomic analysis of the family Iridoviridae: re-annotating and defining the core set of iridovirus genes.</title>
        <authorList>
            <person name="Eaton H.E."/>
            <person name="Metcalf J."/>
            <person name="Penny E."/>
            <person name="Tcherepanov V."/>
            <person name="Upton C."/>
            <person name="Brunetti C.R."/>
        </authorList>
    </citation>
    <scope>GENOME REANNOTATION</scope>
</reference>